<organism>
    <name type="scientific">Syntrophotalea carbinolica (strain DSM 2380 / NBRC 103641 / GraBd1)</name>
    <name type="common">Pelobacter carbinolicus</name>
    <dbReference type="NCBI Taxonomy" id="338963"/>
    <lineage>
        <taxon>Bacteria</taxon>
        <taxon>Pseudomonadati</taxon>
        <taxon>Thermodesulfobacteriota</taxon>
        <taxon>Desulfuromonadia</taxon>
        <taxon>Desulfuromonadales</taxon>
        <taxon>Syntrophotaleaceae</taxon>
        <taxon>Syntrophotalea</taxon>
    </lineage>
</organism>
<dbReference type="EC" id="5.3.1.1" evidence="1"/>
<dbReference type="EMBL" id="CP000142">
    <property type="protein sequence ID" value="ABA88582.1"/>
    <property type="molecule type" value="Genomic_DNA"/>
</dbReference>
<dbReference type="RefSeq" id="WP_011341057.1">
    <property type="nucleotide sequence ID" value="NC_007498.2"/>
</dbReference>
<dbReference type="SMR" id="Q3A4X5"/>
<dbReference type="STRING" id="338963.Pcar_1333"/>
<dbReference type="KEGG" id="pca:Pcar_1333"/>
<dbReference type="eggNOG" id="COG0149">
    <property type="taxonomic scope" value="Bacteria"/>
</dbReference>
<dbReference type="HOGENOM" id="CLU_024251_2_3_7"/>
<dbReference type="OrthoDB" id="9809429at2"/>
<dbReference type="UniPathway" id="UPA00109">
    <property type="reaction ID" value="UER00189"/>
</dbReference>
<dbReference type="UniPathway" id="UPA00138"/>
<dbReference type="Proteomes" id="UP000002534">
    <property type="component" value="Chromosome"/>
</dbReference>
<dbReference type="GO" id="GO:0005829">
    <property type="term" value="C:cytosol"/>
    <property type="evidence" value="ECO:0007669"/>
    <property type="project" value="TreeGrafter"/>
</dbReference>
<dbReference type="GO" id="GO:0004807">
    <property type="term" value="F:triose-phosphate isomerase activity"/>
    <property type="evidence" value="ECO:0007669"/>
    <property type="project" value="UniProtKB-UniRule"/>
</dbReference>
<dbReference type="GO" id="GO:0006094">
    <property type="term" value="P:gluconeogenesis"/>
    <property type="evidence" value="ECO:0007669"/>
    <property type="project" value="UniProtKB-UniRule"/>
</dbReference>
<dbReference type="GO" id="GO:0046166">
    <property type="term" value="P:glyceraldehyde-3-phosphate biosynthetic process"/>
    <property type="evidence" value="ECO:0007669"/>
    <property type="project" value="TreeGrafter"/>
</dbReference>
<dbReference type="GO" id="GO:0019563">
    <property type="term" value="P:glycerol catabolic process"/>
    <property type="evidence" value="ECO:0007669"/>
    <property type="project" value="TreeGrafter"/>
</dbReference>
<dbReference type="GO" id="GO:0006096">
    <property type="term" value="P:glycolytic process"/>
    <property type="evidence" value="ECO:0007669"/>
    <property type="project" value="UniProtKB-UniRule"/>
</dbReference>
<dbReference type="CDD" id="cd00311">
    <property type="entry name" value="TIM"/>
    <property type="match status" value="1"/>
</dbReference>
<dbReference type="FunFam" id="3.20.20.70:FF:000016">
    <property type="entry name" value="Triosephosphate isomerase"/>
    <property type="match status" value="1"/>
</dbReference>
<dbReference type="Gene3D" id="3.20.20.70">
    <property type="entry name" value="Aldolase class I"/>
    <property type="match status" value="1"/>
</dbReference>
<dbReference type="HAMAP" id="MF_00147_B">
    <property type="entry name" value="TIM_B"/>
    <property type="match status" value="1"/>
</dbReference>
<dbReference type="InterPro" id="IPR013785">
    <property type="entry name" value="Aldolase_TIM"/>
</dbReference>
<dbReference type="InterPro" id="IPR035990">
    <property type="entry name" value="TIM_sf"/>
</dbReference>
<dbReference type="InterPro" id="IPR022896">
    <property type="entry name" value="TrioseP_Isoase_bac/euk"/>
</dbReference>
<dbReference type="InterPro" id="IPR000652">
    <property type="entry name" value="Triosephosphate_isomerase"/>
</dbReference>
<dbReference type="InterPro" id="IPR020861">
    <property type="entry name" value="Triosephosphate_isomerase_AS"/>
</dbReference>
<dbReference type="NCBIfam" id="TIGR00419">
    <property type="entry name" value="tim"/>
    <property type="match status" value="1"/>
</dbReference>
<dbReference type="PANTHER" id="PTHR21139">
    <property type="entry name" value="TRIOSEPHOSPHATE ISOMERASE"/>
    <property type="match status" value="1"/>
</dbReference>
<dbReference type="PANTHER" id="PTHR21139:SF42">
    <property type="entry name" value="TRIOSEPHOSPHATE ISOMERASE"/>
    <property type="match status" value="1"/>
</dbReference>
<dbReference type="Pfam" id="PF00121">
    <property type="entry name" value="TIM"/>
    <property type="match status" value="1"/>
</dbReference>
<dbReference type="SUPFAM" id="SSF51351">
    <property type="entry name" value="Triosephosphate isomerase (TIM)"/>
    <property type="match status" value="1"/>
</dbReference>
<dbReference type="PROSITE" id="PS00171">
    <property type="entry name" value="TIM_1"/>
    <property type="match status" value="1"/>
</dbReference>
<dbReference type="PROSITE" id="PS51440">
    <property type="entry name" value="TIM_2"/>
    <property type="match status" value="1"/>
</dbReference>
<reference key="1">
    <citation type="submission" date="2005-10" db="EMBL/GenBank/DDBJ databases">
        <title>Complete sequence of Pelobacter carbinolicus DSM 2380.</title>
        <authorList>
            <person name="Copeland A."/>
            <person name="Lucas S."/>
            <person name="Lapidus A."/>
            <person name="Barry K."/>
            <person name="Detter J.C."/>
            <person name="Glavina T."/>
            <person name="Hammon N."/>
            <person name="Israni S."/>
            <person name="Pitluck S."/>
            <person name="Chertkov O."/>
            <person name="Schmutz J."/>
            <person name="Larimer F."/>
            <person name="Land M."/>
            <person name="Kyrpides N."/>
            <person name="Ivanova N."/>
            <person name="Richardson P."/>
        </authorList>
    </citation>
    <scope>NUCLEOTIDE SEQUENCE [LARGE SCALE GENOMIC DNA]</scope>
    <source>
        <strain>DSM 2380 / NBRC 103641 / GraBd1</strain>
    </source>
</reference>
<sequence>MRRPFIAGNWKLHKTSAEAAALVGELKGALSDVVDRDIVVAPVFTSLAAVIATLEKSDISVAAQNCYPENQGAFTGEVSPALLKDAGCRYVIVGHSERRQLFAESDAFINRKVKAVIDAGLSAILCIGETLEEREADKTFDVLERQVRCGLEGLDAAAMEQIVVAYEPVWAIGTGKTATDSQAQQAHSFIRSLVNDIFGSKVAQQVRIVYGGSVKPGNVDGLLQQPDIDGALVGGASLNAEDFIRIVKFKAV</sequence>
<feature type="chain" id="PRO_0000307520" description="Triosephosphate isomerase">
    <location>
        <begin position="1"/>
        <end position="252"/>
    </location>
</feature>
<feature type="active site" description="Electrophile" evidence="1">
    <location>
        <position position="95"/>
    </location>
</feature>
<feature type="active site" description="Proton acceptor" evidence="1">
    <location>
        <position position="167"/>
    </location>
</feature>
<feature type="binding site" evidence="1">
    <location>
        <begin position="9"/>
        <end position="11"/>
    </location>
    <ligand>
        <name>substrate</name>
    </ligand>
</feature>
<feature type="binding site" evidence="1">
    <location>
        <position position="173"/>
    </location>
    <ligand>
        <name>substrate</name>
    </ligand>
</feature>
<feature type="binding site" evidence="1">
    <location>
        <position position="213"/>
    </location>
    <ligand>
        <name>substrate</name>
    </ligand>
</feature>
<feature type="binding site" evidence="1">
    <location>
        <begin position="234"/>
        <end position="235"/>
    </location>
    <ligand>
        <name>substrate</name>
    </ligand>
</feature>
<proteinExistence type="inferred from homology"/>
<comment type="function">
    <text evidence="1">Involved in the gluconeogenesis. Catalyzes stereospecifically the conversion of dihydroxyacetone phosphate (DHAP) to D-glyceraldehyde-3-phosphate (G3P).</text>
</comment>
<comment type="catalytic activity">
    <reaction evidence="1">
        <text>D-glyceraldehyde 3-phosphate = dihydroxyacetone phosphate</text>
        <dbReference type="Rhea" id="RHEA:18585"/>
        <dbReference type="ChEBI" id="CHEBI:57642"/>
        <dbReference type="ChEBI" id="CHEBI:59776"/>
        <dbReference type="EC" id="5.3.1.1"/>
    </reaction>
</comment>
<comment type="pathway">
    <text evidence="1">Carbohydrate biosynthesis; gluconeogenesis.</text>
</comment>
<comment type="pathway">
    <text evidence="1">Carbohydrate degradation; glycolysis; D-glyceraldehyde 3-phosphate from glycerone phosphate: step 1/1.</text>
</comment>
<comment type="subunit">
    <text evidence="1">Homodimer.</text>
</comment>
<comment type="subcellular location">
    <subcellularLocation>
        <location evidence="1">Cytoplasm</location>
    </subcellularLocation>
</comment>
<comment type="similarity">
    <text evidence="1">Belongs to the triosephosphate isomerase family.</text>
</comment>
<protein>
    <recommendedName>
        <fullName evidence="1">Triosephosphate isomerase</fullName>
        <shortName evidence="1">TIM</shortName>
        <shortName evidence="1">TPI</shortName>
        <ecNumber evidence="1">5.3.1.1</ecNumber>
    </recommendedName>
    <alternativeName>
        <fullName evidence="1">Triose-phosphate isomerase</fullName>
    </alternativeName>
</protein>
<gene>
    <name evidence="1" type="primary">tpiA</name>
    <name type="ordered locus">Pcar_1333</name>
</gene>
<keyword id="KW-0963">Cytoplasm</keyword>
<keyword id="KW-0312">Gluconeogenesis</keyword>
<keyword id="KW-0324">Glycolysis</keyword>
<keyword id="KW-0413">Isomerase</keyword>
<keyword id="KW-1185">Reference proteome</keyword>
<evidence type="ECO:0000255" key="1">
    <source>
        <dbReference type="HAMAP-Rule" id="MF_00147"/>
    </source>
</evidence>
<accession>Q3A4X5</accession>
<name>TPIS_SYNC1</name>